<organism>
    <name type="scientific">Ehrlichia chaffeensis (strain ATCC CRL-10679 / Arkansas)</name>
    <dbReference type="NCBI Taxonomy" id="205920"/>
    <lineage>
        <taxon>Bacteria</taxon>
        <taxon>Pseudomonadati</taxon>
        <taxon>Pseudomonadota</taxon>
        <taxon>Alphaproteobacteria</taxon>
        <taxon>Rickettsiales</taxon>
        <taxon>Anaplasmataceae</taxon>
        <taxon>Ehrlichia</taxon>
    </lineage>
</organism>
<dbReference type="EMBL" id="CP000236">
    <property type="protein sequence ID" value="ABD45476.1"/>
    <property type="molecule type" value="Genomic_DNA"/>
</dbReference>
<dbReference type="RefSeq" id="WP_011452885.1">
    <property type="nucleotide sequence ID" value="NC_007799.1"/>
</dbReference>
<dbReference type="SMR" id="Q2GFT9"/>
<dbReference type="STRING" id="205920.ECH_0900"/>
<dbReference type="KEGG" id="ech:ECH_0900"/>
<dbReference type="eggNOG" id="COG1219">
    <property type="taxonomic scope" value="Bacteria"/>
</dbReference>
<dbReference type="HOGENOM" id="CLU_014218_8_2_5"/>
<dbReference type="OrthoDB" id="9804062at2"/>
<dbReference type="Proteomes" id="UP000008320">
    <property type="component" value="Chromosome"/>
</dbReference>
<dbReference type="GO" id="GO:0009376">
    <property type="term" value="C:HslUV protease complex"/>
    <property type="evidence" value="ECO:0007669"/>
    <property type="project" value="TreeGrafter"/>
</dbReference>
<dbReference type="GO" id="GO:0005524">
    <property type="term" value="F:ATP binding"/>
    <property type="evidence" value="ECO:0007669"/>
    <property type="project" value="UniProtKB-UniRule"/>
</dbReference>
<dbReference type="GO" id="GO:0016887">
    <property type="term" value="F:ATP hydrolysis activity"/>
    <property type="evidence" value="ECO:0007669"/>
    <property type="project" value="InterPro"/>
</dbReference>
<dbReference type="GO" id="GO:0140662">
    <property type="term" value="F:ATP-dependent protein folding chaperone"/>
    <property type="evidence" value="ECO:0007669"/>
    <property type="project" value="InterPro"/>
</dbReference>
<dbReference type="GO" id="GO:0046983">
    <property type="term" value="F:protein dimerization activity"/>
    <property type="evidence" value="ECO:0007669"/>
    <property type="project" value="InterPro"/>
</dbReference>
<dbReference type="GO" id="GO:0051082">
    <property type="term" value="F:unfolded protein binding"/>
    <property type="evidence" value="ECO:0007669"/>
    <property type="project" value="UniProtKB-UniRule"/>
</dbReference>
<dbReference type="GO" id="GO:0008270">
    <property type="term" value="F:zinc ion binding"/>
    <property type="evidence" value="ECO:0007669"/>
    <property type="project" value="InterPro"/>
</dbReference>
<dbReference type="GO" id="GO:0051301">
    <property type="term" value="P:cell division"/>
    <property type="evidence" value="ECO:0007669"/>
    <property type="project" value="TreeGrafter"/>
</dbReference>
<dbReference type="GO" id="GO:0051603">
    <property type="term" value="P:proteolysis involved in protein catabolic process"/>
    <property type="evidence" value="ECO:0007669"/>
    <property type="project" value="TreeGrafter"/>
</dbReference>
<dbReference type="CDD" id="cd19497">
    <property type="entry name" value="RecA-like_ClpX"/>
    <property type="match status" value="1"/>
</dbReference>
<dbReference type="FunFam" id="1.10.8.60:FF:000002">
    <property type="entry name" value="ATP-dependent Clp protease ATP-binding subunit ClpX"/>
    <property type="match status" value="1"/>
</dbReference>
<dbReference type="FunFam" id="3.40.50.300:FF:000005">
    <property type="entry name" value="ATP-dependent Clp protease ATP-binding subunit ClpX"/>
    <property type="match status" value="1"/>
</dbReference>
<dbReference type="Gene3D" id="1.10.8.60">
    <property type="match status" value="1"/>
</dbReference>
<dbReference type="Gene3D" id="6.20.220.10">
    <property type="entry name" value="ClpX chaperone, C4-type zinc finger domain"/>
    <property type="match status" value="1"/>
</dbReference>
<dbReference type="Gene3D" id="3.40.50.300">
    <property type="entry name" value="P-loop containing nucleotide triphosphate hydrolases"/>
    <property type="match status" value="1"/>
</dbReference>
<dbReference type="HAMAP" id="MF_00175">
    <property type="entry name" value="ClpX"/>
    <property type="match status" value="1"/>
</dbReference>
<dbReference type="InterPro" id="IPR003593">
    <property type="entry name" value="AAA+_ATPase"/>
</dbReference>
<dbReference type="InterPro" id="IPR050052">
    <property type="entry name" value="ATP-dep_Clp_protease_ClpX"/>
</dbReference>
<dbReference type="InterPro" id="IPR003959">
    <property type="entry name" value="ATPase_AAA_core"/>
</dbReference>
<dbReference type="InterPro" id="IPR019489">
    <property type="entry name" value="Clp_ATPase_C"/>
</dbReference>
<dbReference type="InterPro" id="IPR004487">
    <property type="entry name" value="Clp_protease_ATP-bd_su_ClpX"/>
</dbReference>
<dbReference type="InterPro" id="IPR046425">
    <property type="entry name" value="ClpX_bact"/>
</dbReference>
<dbReference type="InterPro" id="IPR027417">
    <property type="entry name" value="P-loop_NTPase"/>
</dbReference>
<dbReference type="InterPro" id="IPR010603">
    <property type="entry name" value="Znf_CppX_C4"/>
</dbReference>
<dbReference type="InterPro" id="IPR038366">
    <property type="entry name" value="Znf_CppX_C4_sf"/>
</dbReference>
<dbReference type="NCBIfam" id="TIGR00382">
    <property type="entry name" value="clpX"/>
    <property type="match status" value="1"/>
</dbReference>
<dbReference type="NCBIfam" id="NF003745">
    <property type="entry name" value="PRK05342.1"/>
    <property type="match status" value="1"/>
</dbReference>
<dbReference type="PANTHER" id="PTHR48102:SF7">
    <property type="entry name" value="ATP-DEPENDENT CLP PROTEASE ATP-BINDING SUBUNIT CLPX-LIKE, MITOCHONDRIAL"/>
    <property type="match status" value="1"/>
</dbReference>
<dbReference type="PANTHER" id="PTHR48102">
    <property type="entry name" value="ATP-DEPENDENT CLP PROTEASE ATP-BINDING SUBUNIT CLPX-LIKE, MITOCHONDRIAL-RELATED"/>
    <property type="match status" value="1"/>
</dbReference>
<dbReference type="Pfam" id="PF07724">
    <property type="entry name" value="AAA_2"/>
    <property type="match status" value="1"/>
</dbReference>
<dbReference type="Pfam" id="PF10431">
    <property type="entry name" value="ClpB_D2-small"/>
    <property type="match status" value="1"/>
</dbReference>
<dbReference type="Pfam" id="PF06689">
    <property type="entry name" value="zf-C4_ClpX"/>
    <property type="match status" value="1"/>
</dbReference>
<dbReference type="SMART" id="SM00382">
    <property type="entry name" value="AAA"/>
    <property type="match status" value="1"/>
</dbReference>
<dbReference type="SMART" id="SM01086">
    <property type="entry name" value="ClpB_D2-small"/>
    <property type="match status" value="1"/>
</dbReference>
<dbReference type="SMART" id="SM00994">
    <property type="entry name" value="zf-C4_ClpX"/>
    <property type="match status" value="1"/>
</dbReference>
<dbReference type="SUPFAM" id="SSF57716">
    <property type="entry name" value="Glucocorticoid receptor-like (DNA-binding domain)"/>
    <property type="match status" value="1"/>
</dbReference>
<dbReference type="SUPFAM" id="SSF52540">
    <property type="entry name" value="P-loop containing nucleoside triphosphate hydrolases"/>
    <property type="match status" value="1"/>
</dbReference>
<dbReference type="PROSITE" id="PS51902">
    <property type="entry name" value="CLPX_ZB"/>
    <property type="match status" value="1"/>
</dbReference>
<protein>
    <recommendedName>
        <fullName evidence="1">ATP-dependent Clp protease ATP-binding subunit ClpX</fullName>
    </recommendedName>
</protein>
<name>CLPX_EHRCR</name>
<sequence>MADNEKNSCSCSFCGKIHSEVRKLIAGPSVFICNECIDLCSGILQEESRSYKKTDTLKLKPKEIKKVLDEYVIGQEHSKKVLSVAVYNHYKRLSNLSVISEVEISKSNVLLIGPTGSGKTLLARTLARVLQVPFAMADATTLTEAGYVGEDVENILLKLLQAANFNVDAAQRGIIYIDEVDKISRKSENTSITRDVSGEGVQQALLKVIEGTVSSVPPQGGRKHPHQEFIQINTDNILFIFGGAFDGLDKIIESRHRGSSMGFEANVQKVSKNKDIFCYTEPEDLVKFGLIPEFVGRIPVITSLGELDESTLCRILVEPKNSLVKQYKKLFEMDNINLQFDDSALSVIAKKAAVRKTGARGLRAILEALLLDLMFESPGSSDVNQVVISKEMVEELMVSSHLFLKH</sequence>
<reference key="1">
    <citation type="journal article" date="2006" name="PLoS Genet.">
        <title>Comparative genomics of emerging human ehrlichiosis agents.</title>
        <authorList>
            <person name="Dunning Hotopp J.C."/>
            <person name="Lin M."/>
            <person name="Madupu R."/>
            <person name="Crabtree J."/>
            <person name="Angiuoli S.V."/>
            <person name="Eisen J.A."/>
            <person name="Seshadri R."/>
            <person name="Ren Q."/>
            <person name="Wu M."/>
            <person name="Utterback T.R."/>
            <person name="Smith S."/>
            <person name="Lewis M."/>
            <person name="Khouri H."/>
            <person name="Zhang C."/>
            <person name="Niu H."/>
            <person name="Lin Q."/>
            <person name="Ohashi N."/>
            <person name="Zhi N."/>
            <person name="Nelson W.C."/>
            <person name="Brinkac L.M."/>
            <person name="Dodson R.J."/>
            <person name="Rosovitz M.J."/>
            <person name="Sundaram J.P."/>
            <person name="Daugherty S.C."/>
            <person name="Davidsen T."/>
            <person name="Durkin A.S."/>
            <person name="Gwinn M.L."/>
            <person name="Haft D.H."/>
            <person name="Selengut J.D."/>
            <person name="Sullivan S.A."/>
            <person name="Zafar N."/>
            <person name="Zhou L."/>
            <person name="Benahmed F."/>
            <person name="Forberger H."/>
            <person name="Halpin R."/>
            <person name="Mulligan S."/>
            <person name="Robinson J."/>
            <person name="White O."/>
            <person name="Rikihisa Y."/>
            <person name="Tettelin H."/>
        </authorList>
    </citation>
    <scope>NUCLEOTIDE SEQUENCE [LARGE SCALE GENOMIC DNA]</scope>
    <source>
        <strain>ATCC CRL-10679 / Arkansas</strain>
    </source>
</reference>
<feature type="chain" id="PRO_1000024554" description="ATP-dependent Clp protease ATP-binding subunit ClpX">
    <location>
        <begin position="1"/>
        <end position="406"/>
    </location>
</feature>
<feature type="domain" description="ClpX-type ZB" evidence="2">
    <location>
        <begin position="1"/>
        <end position="52"/>
    </location>
</feature>
<feature type="binding site" evidence="2">
    <location>
        <position position="11"/>
    </location>
    <ligand>
        <name>Zn(2+)</name>
        <dbReference type="ChEBI" id="CHEBI:29105"/>
    </ligand>
</feature>
<feature type="binding site" evidence="2">
    <location>
        <position position="14"/>
    </location>
    <ligand>
        <name>Zn(2+)</name>
        <dbReference type="ChEBI" id="CHEBI:29105"/>
    </ligand>
</feature>
<feature type="binding site" evidence="2">
    <location>
        <position position="33"/>
    </location>
    <ligand>
        <name>Zn(2+)</name>
        <dbReference type="ChEBI" id="CHEBI:29105"/>
    </ligand>
</feature>
<feature type="binding site" evidence="2">
    <location>
        <position position="36"/>
    </location>
    <ligand>
        <name>Zn(2+)</name>
        <dbReference type="ChEBI" id="CHEBI:29105"/>
    </ligand>
</feature>
<feature type="binding site" evidence="1">
    <location>
        <begin position="114"/>
        <end position="121"/>
    </location>
    <ligand>
        <name>ATP</name>
        <dbReference type="ChEBI" id="CHEBI:30616"/>
    </ligand>
</feature>
<keyword id="KW-0067">ATP-binding</keyword>
<keyword id="KW-0143">Chaperone</keyword>
<keyword id="KW-0479">Metal-binding</keyword>
<keyword id="KW-0547">Nucleotide-binding</keyword>
<keyword id="KW-1185">Reference proteome</keyword>
<keyword id="KW-0862">Zinc</keyword>
<comment type="function">
    <text evidence="1">ATP-dependent specificity component of the Clp protease. It directs the protease to specific substrates. Can perform chaperone functions in the absence of ClpP.</text>
</comment>
<comment type="subunit">
    <text evidence="1">Component of the ClpX-ClpP complex. Forms a hexameric ring that, in the presence of ATP, binds to fourteen ClpP subunits assembled into a disk-like structure with a central cavity, resembling the structure of eukaryotic proteasomes.</text>
</comment>
<comment type="similarity">
    <text evidence="1">Belongs to the ClpX chaperone family.</text>
</comment>
<gene>
    <name evidence="1" type="primary">clpX</name>
    <name type="ordered locus">ECH_0900</name>
</gene>
<proteinExistence type="inferred from homology"/>
<evidence type="ECO:0000255" key="1">
    <source>
        <dbReference type="HAMAP-Rule" id="MF_00175"/>
    </source>
</evidence>
<evidence type="ECO:0000255" key="2">
    <source>
        <dbReference type="PROSITE-ProRule" id="PRU01250"/>
    </source>
</evidence>
<accession>Q2GFT9</accession>